<keyword id="KW-0227">DNA damage</keyword>
<keyword id="KW-0234">DNA repair</keyword>
<keyword id="KW-0507">mRNA processing</keyword>
<keyword id="KW-0508">mRNA splicing</keyword>
<keyword id="KW-0539">Nucleus</keyword>
<keyword id="KW-1185">Reference proteome</keyword>
<keyword id="KW-0677">Repeat</keyword>
<keyword id="KW-0747">Spliceosome</keyword>
<keyword id="KW-0804">Transcription</keyword>
<comment type="function">
    <text evidence="2">Involved in pre-mRNA splicing as component of the spliceosome. Involved in transcription-coupled repair (TCR), transcription and pre-mRNA splicing.</text>
</comment>
<comment type="subunit">
    <text evidence="2">Identified in the spliceosome C complex.</text>
</comment>
<comment type="subcellular location">
    <subcellularLocation>
        <location evidence="1">Nucleus</location>
    </subcellularLocation>
    <text evidence="1">Detected in the splicing complex carrying pre-mRNA.</text>
</comment>
<comment type="similarity">
    <text evidence="4">Belongs to the crooked-neck family.</text>
</comment>
<proteinExistence type="inferred from homology"/>
<feature type="chain" id="PRO_0000328142" description="Pre-mRNA-splicing factor SYF1">
    <location>
        <begin position="1"/>
        <end position="850"/>
    </location>
</feature>
<feature type="repeat" description="HAT 1">
    <location>
        <begin position="25"/>
        <end position="57"/>
    </location>
</feature>
<feature type="repeat" description="HAT 2">
    <location>
        <begin position="58"/>
        <end position="90"/>
    </location>
</feature>
<feature type="repeat" description="HAT 3">
    <location>
        <begin position="100"/>
        <end position="132"/>
    </location>
</feature>
<feature type="repeat" description="HAT 4">
    <location>
        <begin position="134"/>
        <end position="168"/>
    </location>
</feature>
<feature type="repeat" description="HAT 5">
    <location>
        <begin position="171"/>
        <end position="203"/>
    </location>
</feature>
<feature type="repeat" description="HAT 6">
    <location>
        <begin position="281"/>
        <end position="316"/>
    </location>
</feature>
<feature type="repeat" description="HAT 7">
    <location>
        <begin position="477"/>
        <end position="509"/>
    </location>
</feature>
<feature type="repeat" description="HAT 8">
    <location>
        <begin position="511"/>
        <end position="543"/>
    </location>
</feature>
<feature type="repeat" description="HAT 9">
    <location>
        <begin position="545"/>
        <end position="579"/>
    </location>
</feature>
<feature type="repeat" description="HAT 10">
    <location>
        <begin position="584"/>
        <end position="618"/>
    </location>
</feature>
<feature type="repeat" description="HAT 11">
    <location>
        <begin position="692"/>
        <end position="726"/>
    </location>
</feature>
<feature type="region of interest" description="Disordered" evidence="3">
    <location>
        <begin position="761"/>
        <end position="837"/>
    </location>
</feature>
<feature type="compositionally biased region" description="Basic and acidic residues" evidence="3">
    <location>
        <begin position="761"/>
        <end position="771"/>
    </location>
</feature>
<feature type="compositionally biased region" description="Low complexity" evidence="3">
    <location>
        <begin position="772"/>
        <end position="792"/>
    </location>
</feature>
<feature type="compositionally biased region" description="Polar residues" evidence="3">
    <location>
        <begin position="793"/>
        <end position="812"/>
    </location>
</feature>
<feature type="compositionally biased region" description="Acidic residues" evidence="3">
    <location>
        <begin position="818"/>
        <end position="836"/>
    </location>
</feature>
<organism>
    <name type="scientific">Dictyostelium discoideum</name>
    <name type="common">Social amoeba</name>
    <dbReference type="NCBI Taxonomy" id="44689"/>
    <lineage>
        <taxon>Eukaryota</taxon>
        <taxon>Amoebozoa</taxon>
        <taxon>Evosea</taxon>
        <taxon>Eumycetozoa</taxon>
        <taxon>Dictyostelia</taxon>
        <taxon>Dictyosteliales</taxon>
        <taxon>Dictyosteliaceae</taxon>
        <taxon>Dictyostelium</taxon>
    </lineage>
</organism>
<accession>Q54Z08</accession>
<name>SYF1_DICDI</name>
<dbReference type="EMBL" id="AAFI02000023">
    <property type="protein sequence ID" value="EAL68161.1"/>
    <property type="molecule type" value="Genomic_DNA"/>
</dbReference>
<dbReference type="RefSeq" id="XP_642044.1">
    <property type="nucleotide sequence ID" value="XM_636952.1"/>
</dbReference>
<dbReference type="SMR" id="Q54Z08"/>
<dbReference type="FunCoup" id="Q54Z08">
    <property type="interactions" value="1068"/>
</dbReference>
<dbReference type="STRING" id="44689.Q54Z08"/>
<dbReference type="PaxDb" id="44689-DDB0233461"/>
<dbReference type="EnsemblProtists" id="EAL68161">
    <property type="protein sequence ID" value="EAL68161"/>
    <property type="gene ID" value="DDB_G0277977"/>
</dbReference>
<dbReference type="GeneID" id="8621256"/>
<dbReference type="KEGG" id="ddi:DDB_G0277977"/>
<dbReference type="dictyBase" id="DDB_G0277977">
    <property type="gene designation" value="xab2"/>
</dbReference>
<dbReference type="VEuPathDB" id="AmoebaDB:DDB_G0277977"/>
<dbReference type="eggNOG" id="KOG2047">
    <property type="taxonomic scope" value="Eukaryota"/>
</dbReference>
<dbReference type="HOGENOM" id="CLU_007736_0_0_1"/>
<dbReference type="InParanoid" id="Q54Z08"/>
<dbReference type="OMA" id="IWYNYLR"/>
<dbReference type="PhylomeDB" id="Q54Z08"/>
<dbReference type="Reactome" id="R-DDI-6781823">
    <property type="pathway name" value="Formation of TC-NER Pre-Incision Complex"/>
</dbReference>
<dbReference type="Reactome" id="R-DDI-6782135">
    <property type="pathway name" value="Dual incision in TC-NER"/>
</dbReference>
<dbReference type="Reactome" id="R-DDI-6782210">
    <property type="pathway name" value="Gap-filling DNA repair synthesis and ligation in TC-NER"/>
</dbReference>
<dbReference type="Reactome" id="R-DDI-72163">
    <property type="pathway name" value="mRNA Splicing - Major Pathway"/>
</dbReference>
<dbReference type="PRO" id="PR:Q54Z08"/>
<dbReference type="Proteomes" id="UP000002195">
    <property type="component" value="Chromosome 3"/>
</dbReference>
<dbReference type="GO" id="GO:0005634">
    <property type="term" value="C:nucleus"/>
    <property type="evidence" value="ECO:0000250"/>
    <property type="project" value="UniProtKB"/>
</dbReference>
<dbReference type="GO" id="GO:0071014">
    <property type="term" value="C:post-mRNA release spliceosomal complex"/>
    <property type="evidence" value="ECO:0000318"/>
    <property type="project" value="GO_Central"/>
</dbReference>
<dbReference type="GO" id="GO:0000974">
    <property type="term" value="C:Prp19 complex"/>
    <property type="evidence" value="ECO:0000318"/>
    <property type="project" value="GO_Central"/>
</dbReference>
<dbReference type="GO" id="GO:0071007">
    <property type="term" value="C:U2-type catalytic step 2 spliceosome"/>
    <property type="evidence" value="ECO:0000250"/>
    <property type="project" value="UniProtKB"/>
</dbReference>
<dbReference type="GO" id="GO:0006281">
    <property type="term" value="P:DNA repair"/>
    <property type="evidence" value="ECO:0007669"/>
    <property type="project" value="UniProtKB-KW"/>
</dbReference>
<dbReference type="GO" id="GO:0000349">
    <property type="term" value="P:generation of catalytic spliceosome for first transesterification step"/>
    <property type="evidence" value="ECO:0000318"/>
    <property type="project" value="GO_Central"/>
</dbReference>
<dbReference type="GO" id="GO:0000398">
    <property type="term" value="P:mRNA splicing, via spliceosome"/>
    <property type="evidence" value="ECO:0000250"/>
    <property type="project" value="UniProtKB"/>
</dbReference>
<dbReference type="FunFam" id="1.25.40.10:FF:000023">
    <property type="entry name" value="Pre-mRNA-splicing factor SYF1"/>
    <property type="match status" value="1"/>
</dbReference>
<dbReference type="FunFam" id="1.25.40.10:FF:000182">
    <property type="entry name" value="Pre-mRNA-splicing factor SYF1"/>
    <property type="match status" value="1"/>
</dbReference>
<dbReference type="FunFam" id="1.25.40.10:FF:002346">
    <property type="entry name" value="Pre-mRNA-splicing factor SYF1"/>
    <property type="match status" value="1"/>
</dbReference>
<dbReference type="FunFam" id="1.25.40.10:FF:003685">
    <property type="entry name" value="Pre-mRNA-splicing factor SYF1"/>
    <property type="match status" value="1"/>
</dbReference>
<dbReference type="Gene3D" id="1.25.40.10">
    <property type="entry name" value="Tetratricopeptide repeat domain"/>
    <property type="match status" value="5"/>
</dbReference>
<dbReference type="InterPro" id="IPR003107">
    <property type="entry name" value="HAT"/>
</dbReference>
<dbReference type="InterPro" id="IPR055433">
    <property type="entry name" value="HAT_Syf1-like_N"/>
</dbReference>
<dbReference type="InterPro" id="IPR056350">
    <property type="entry name" value="HAT_Syf1_central"/>
</dbReference>
<dbReference type="InterPro" id="IPR055430">
    <property type="entry name" value="HAT_Syf1_CNRKL1_C"/>
</dbReference>
<dbReference type="InterPro" id="IPR045075">
    <property type="entry name" value="Syf1-like"/>
</dbReference>
<dbReference type="InterPro" id="IPR011990">
    <property type="entry name" value="TPR-like_helical_dom_sf"/>
</dbReference>
<dbReference type="PANTHER" id="PTHR11246">
    <property type="entry name" value="PRE-MRNA SPLICING FACTOR"/>
    <property type="match status" value="1"/>
</dbReference>
<dbReference type="PANTHER" id="PTHR11246:SF5">
    <property type="entry name" value="PRE-MRNA-SPLICING FACTOR SYF1"/>
    <property type="match status" value="1"/>
</dbReference>
<dbReference type="Pfam" id="PF23231">
    <property type="entry name" value="HAT_Syf1_CNRKL1_C"/>
    <property type="match status" value="1"/>
</dbReference>
<dbReference type="Pfam" id="PF23233">
    <property type="entry name" value="HAT_Syf1_CNRKL1_N"/>
    <property type="match status" value="1"/>
</dbReference>
<dbReference type="Pfam" id="PF23220">
    <property type="entry name" value="HAT_Syf1_M"/>
    <property type="match status" value="1"/>
</dbReference>
<dbReference type="SMART" id="SM00386">
    <property type="entry name" value="HAT"/>
    <property type="match status" value="10"/>
</dbReference>
<dbReference type="SUPFAM" id="SSF48452">
    <property type="entry name" value="TPR-like"/>
    <property type="match status" value="6"/>
</dbReference>
<reference key="1">
    <citation type="journal article" date="2005" name="Nature">
        <title>The genome of the social amoeba Dictyostelium discoideum.</title>
        <authorList>
            <person name="Eichinger L."/>
            <person name="Pachebat J.A."/>
            <person name="Gloeckner G."/>
            <person name="Rajandream M.A."/>
            <person name="Sucgang R."/>
            <person name="Berriman M."/>
            <person name="Song J."/>
            <person name="Olsen R."/>
            <person name="Szafranski K."/>
            <person name="Xu Q."/>
            <person name="Tunggal B."/>
            <person name="Kummerfeld S."/>
            <person name="Madera M."/>
            <person name="Konfortov B.A."/>
            <person name="Rivero F."/>
            <person name="Bankier A.T."/>
            <person name="Lehmann R."/>
            <person name="Hamlin N."/>
            <person name="Davies R."/>
            <person name="Gaudet P."/>
            <person name="Fey P."/>
            <person name="Pilcher K."/>
            <person name="Chen G."/>
            <person name="Saunders D."/>
            <person name="Sodergren E.J."/>
            <person name="Davis P."/>
            <person name="Kerhornou A."/>
            <person name="Nie X."/>
            <person name="Hall N."/>
            <person name="Anjard C."/>
            <person name="Hemphill L."/>
            <person name="Bason N."/>
            <person name="Farbrother P."/>
            <person name="Desany B."/>
            <person name="Just E."/>
            <person name="Morio T."/>
            <person name="Rost R."/>
            <person name="Churcher C.M."/>
            <person name="Cooper J."/>
            <person name="Haydock S."/>
            <person name="van Driessche N."/>
            <person name="Cronin A."/>
            <person name="Goodhead I."/>
            <person name="Muzny D.M."/>
            <person name="Mourier T."/>
            <person name="Pain A."/>
            <person name="Lu M."/>
            <person name="Harper D."/>
            <person name="Lindsay R."/>
            <person name="Hauser H."/>
            <person name="James K.D."/>
            <person name="Quiles M."/>
            <person name="Madan Babu M."/>
            <person name="Saito T."/>
            <person name="Buchrieser C."/>
            <person name="Wardroper A."/>
            <person name="Felder M."/>
            <person name="Thangavelu M."/>
            <person name="Johnson D."/>
            <person name="Knights A."/>
            <person name="Loulseged H."/>
            <person name="Mungall K.L."/>
            <person name="Oliver K."/>
            <person name="Price C."/>
            <person name="Quail M.A."/>
            <person name="Urushihara H."/>
            <person name="Hernandez J."/>
            <person name="Rabbinowitsch E."/>
            <person name="Steffen D."/>
            <person name="Sanders M."/>
            <person name="Ma J."/>
            <person name="Kohara Y."/>
            <person name="Sharp S."/>
            <person name="Simmonds M.N."/>
            <person name="Spiegler S."/>
            <person name="Tivey A."/>
            <person name="Sugano S."/>
            <person name="White B."/>
            <person name="Walker D."/>
            <person name="Woodward J.R."/>
            <person name="Winckler T."/>
            <person name="Tanaka Y."/>
            <person name="Shaulsky G."/>
            <person name="Schleicher M."/>
            <person name="Weinstock G.M."/>
            <person name="Rosenthal A."/>
            <person name="Cox E.C."/>
            <person name="Chisholm R.L."/>
            <person name="Gibbs R.A."/>
            <person name="Loomis W.F."/>
            <person name="Platzer M."/>
            <person name="Kay R.R."/>
            <person name="Williams J.G."/>
            <person name="Dear P.H."/>
            <person name="Noegel A.A."/>
            <person name="Barrell B.G."/>
            <person name="Kuspa A."/>
        </authorList>
    </citation>
    <scope>NUCLEOTIDE SEQUENCE [LARGE SCALE GENOMIC DNA]</scope>
    <source>
        <strain>AX4</strain>
    </source>
</reference>
<sequence>MPSINENEDIINKLKMSTITDDIIIQPSIDDLPYEEDVSKNPYSVNCWLRYLEFKQGSPQKQRNYIYERAIRELPRSYKIWHQYLLERTLAIRGKCILENSFEAVNTLFERSLVFLDKMPRIWIEYCEFLMIQEKITLTRKTFDRALIALPVTQHYRIWNEYTKFILKRSIPSLTCIRVYKRYLKIQPEKVEEYIEYLIKIKEWQEVVNQLIKLLDNVKFKSIKGKSRHDHWLQLCEILSSYPKQITGVDVDSVIRSGIGKFSDQIGKLWCYLSDYYIQLAQFEKARDIFEEALTSVGTARDFSFIWESYTQFEDSLIAAKQEILEEDPSEDNLLEFDIIIERYENLIQRQPLLLNSVMLKQNPNNVQEWLKRVNLYSNPTPNVKMIIQTFTDSIKSIDPQLAKGKLSTIYSTFAHFYEQNNKLSQARLIFENSLTVNFKTIDDLSTLYCDYAEMELKHRNYEKAIEILKRGTVSPKKQNTIIEENEPVQKRLFKSIKIWTFYVDLEESFGTFHNTKSIYEKMIQLKVVTPQIILNFAKYLEENKYFEDMFKAYEHGVQLFLFPHVQDIWITYLTKFIQRYAGMKLERTRDLFEQVLSKVPPKESIIFYLMYANFEEQYGLARHSMAVYDRAAKSVDKEDRFKMYLLYIHRASEFFGVNQTREIFSKAIEQLPDQYVRDMCLKFADMEKKYGEIDRARSIYIHGSQFSDPRTSMFYWNTWSDFEKLHGNEDTFKEMLRIRRSVQASYITQNPTLALLNKLNNKDDKDDKNQQQKQQQQQQEKQQQQQQQQQQASTLTKSKPVTVSLPETIQYNKKIENDDEINLDDDEEEEEEEDQLAIKAFPKTLLKII</sequence>
<evidence type="ECO:0000250" key="1">
    <source>
        <dbReference type="UniProtKB" id="Q99PK0"/>
    </source>
</evidence>
<evidence type="ECO:0000250" key="2">
    <source>
        <dbReference type="UniProtKB" id="Q9HCS7"/>
    </source>
</evidence>
<evidence type="ECO:0000256" key="3">
    <source>
        <dbReference type="SAM" id="MobiDB-lite"/>
    </source>
</evidence>
<evidence type="ECO:0000305" key="4"/>
<protein>
    <recommendedName>
        <fullName>Pre-mRNA-splicing factor SYF1</fullName>
    </recommendedName>
    <alternativeName>
        <fullName>Protein XAB2 homolog</fullName>
    </alternativeName>
</protein>
<gene>
    <name type="primary">xab2</name>
    <name type="synonym">syf1</name>
    <name type="ORF">DDB_G0277977</name>
</gene>